<protein>
    <recommendedName>
        <fullName>L-2,4-diaminobutyric acid acetyltransferase</fullName>
        <shortName evidence="3">DABA acetyltransferase</shortName>
        <ecNumber evidence="2">2.3.1.178</ecNumber>
    </recommendedName>
</protein>
<sequence length="192" mass="21170">MNATTEPFTPSADLAKPSVADAVVGHEASPLFIRKPSPDDGWGIYELVKSCPPLDVNSAYAYLLLATQFRDSCAVATNEEGEIVGFVSGYVKSNAPDTYFLWQVAVGEKARGTGLARRLVEAVMTRPEMAEVHHLETTITPDNQASWGLFRRLADRWQAPLNSREYFSTDQLGGEHDPENLVRIGPFQTDQI</sequence>
<comment type="function">
    <text evidence="2">Catalyzes the acetylation of L-2,4-diaminobutyrate (DABA) to gamma-N-acetyl-alpha,gamma-diaminobutyric acid (ADABA) with acetyl coenzyme A. Does not acetylate amino acids like GABA, L-ornithine, L-lysine and L-aspartate.</text>
</comment>
<comment type="catalytic activity">
    <reaction evidence="2">
        <text>L-2,4-diaminobutanoate + acetyl-CoA = (2S)-4-acetamido-2-aminobutanoate + CoA + H(+)</text>
        <dbReference type="Rhea" id="RHEA:16901"/>
        <dbReference type="ChEBI" id="CHEBI:15378"/>
        <dbReference type="ChEBI" id="CHEBI:57287"/>
        <dbReference type="ChEBI" id="CHEBI:57288"/>
        <dbReference type="ChEBI" id="CHEBI:58761"/>
        <dbReference type="ChEBI" id="CHEBI:58929"/>
        <dbReference type="EC" id="2.3.1.178"/>
    </reaction>
</comment>
<comment type="biophysicochemical properties">
    <phDependence>
        <text evidence="2">Optimum pH is 8.2.</text>
    </phDependence>
    <temperatureDependence>
        <text evidence="2">Optimum temperature is 20 degrees Celsius.</text>
    </temperatureDependence>
</comment>
<comment type="pathway">
    <text>Amine and polyamine biosynthesis; ectoine biosynthesis; L-ectoine from L-aspartate 4-semialdehyde: step 2/3.</text>
</comment>
<comment type="similarity">
    <text evidence="4">Belongs to the acetyltransferase family. EctA subfamily.</text>
</comment>
<name>ECTA_HALED</name>
<gene>
    <name type="primary">ectA</name>
    <name type="ordered locus">HELO_2588</name>
</gene>
<accession>O52249</accession>
<accession>E1VCW7</accession>
<proteinExistence type="evidence at protein level"/>
<reference key="1">
    <citation type="journal article" date="1998" name="FEMS Microbiol. Lett.">
        <title>Construction and characterization of an NaCl-sensitive mutant of Halomonas elongata impaired in ectoine biosynthesis.</title>
        <authorList>
            <person name="Goeller K."/>
            <person name="Ofer A."/>
            <person name="Galinski E.A."/>
        </authorList>
    </citation>
    <scope>NUCLEOTIDE SEQUENCE [GENOMIC DNA]</scope>
    <source>
        <strain>ATCC 33173 / DSM 2581 / NBRC 15536 / NCIMB 2198 / 1H9</strain>
    </source>
</reference>
<reference key="2">
    <citation type="journal article" date="2011" name="Environ. Microbiol.">
        <title>A blueprint of ectoine metabolism from the genome of the industrial producer Halomonas elongata DSM 2581(T).</title>
        <authorList>
            <person name="Schwibbert K."/>
            <person name="Marin-Sanguino A."/>
            <person name="Bagyan I."/>
            <person name="Heidrich G."/>
            <person name="Lentzen G."/>
            <person name="Seitz H."/>
            <person name="Rampp M."/>
            <person name="Schuster S.C."/>
            <person name="Klenk H.P."/>
            <person name="Pfeiffer F."/>
            <person name="Oesterhelt D."/>
            <person name="Kunte H.J."/>
        </authorList>
    </citation>
    <scope>NUCLEOTIDE SEQUENCE [LARGE SCALE GENOMIC DNA]</scope>
    <source>
        <strain>ATCC 33173 / DSM 2581 / NBRC 15536 / NCIMB 2198 / 1H9</strain>
    </source>
</reference>
<reference key="3">
    <citation type="journal article" date="1999" name="J. Bacteriol.">
        <title>Characterization of biosynthetic enzymes for ectoine as a compatible solute in a moderately halophilic eubacterium, Halomonas elongata.</title>
        <authorList>
            <person name="Ono H."/>
            <person name="Sawada K."/>
            <person name="Khunajakr N."/>
            <person name="Tao T."/>
            <person name="Yamamoto M."/>
            <person name="Hiramoto M."/>
            <person name="Shinmyo A."/>
            <person name="Takano M."/>
            <person name="Murooka Y."/>
        </authorList>
    </citation>
    <scope>FUNCTION</scope>
    <scope>CATALYTIC ACTIVITY</scope>
    <scope>BIOPHYSICOCHEMICAL PROPERTIES</scope>
    <scope>CHARACTERIZATION</scope>
    <source>
        <strain>OUT30018</strain>
    </source>
</reference>
<organism>
    <name type="scientific">Halomonas elongata (strain ATCC 33173 / DSM 2581 / NBRC 15536 / NCIMB 2198 / 1H9)</name>
    <dbReference type="NCBI Taxonomy" id="768066"/>
    <lineage>
        <taxon>Bacteria</taxon>
        <taxon>Pseudomonadati</taxon>
        <taxon>Pseudomonadota</taxon>
        <taxon>Gammaproteobacteria</taxon>
        <taxon>Oceanospirillales</taxon>
        <taxon>Halomonadaceae</taxon>
        <taxon>Halomonas</taxon>
    </lineage>
</organism>
<evidence type="ECO:0000255" key="1">
    <source>
        <dbReference type="PROSITE-ProRule" id="PRU00532"/>
    </source>
</evidence>
<evidence type="ECO:0000269" key="2">
    <source>
    </source>
</evidence>
<evidence type="ECO:0000303" key="3">
    <source>
    </source>
</evidence>
<evidence type="ECO:0000305" key="4"/>
<keyword id="KW-0012">Acyltransferase</keyword>
<keyword id="KW-0808">Transferase</keyword>
<dbReference type="EC" id="2.3.1.178" evidence="2"/>
<dbReference type="EMBL" id="AF031489">
    <property type="protein sequence ID" value="AAC15881.1"/>
    <property type="molecule type" value="Genomic_DNA"/>
</dbReference>
<dbReference type="EMBL" id="FN869568">
    <property type="protein sequence ID" value="CBV42472.1"/>
    <property type="molecule type" value="Genomic_DNA"/>
</dbReference>
<dbReference type="RefSeq" id="WP_013332344.1">
    <property type="nucleotide sequence ID" value="NC_014532.2"/>
</dbReference>
<dbReference type="SMR" id="O52249"/>
<dbReference type="STRING" id="768066.HELO_2588"/>
<dbReference type="GeneID" id="91009907"/>
<dbReference type="KEGG" id="hel:HELO_2588"/>
<dbReference type="eggNOG" id="COG0456">
    <property type="taxonomic scope" value="Bacteria"/>
</dbReference>
<dbReference type="HOGENOM" id="CLU_111896_0_0_6"/>
<dbReference type="OrthoDB" id="2436196at2"/>
<dbReference type="BioCyc" id="MetaCyc:MONOMER-802"/>
<dbReference type="UniPathway" id="UPA00067">
    <property type="reaction ID" value="UER00122"/>
</dbReference>
<dbReference type="Proteomes" id="UP000008707">
    <property type="component" value="Chromosome"/>
</dbReference>
<dbReference type="GO" id="GO:0033816">
    <property type="term" value="F:diaminobutyrate acetyltransferase activity"/>
    <property type="evidence" value="ECO:0007669"/>
    <property type="project" value="UniProtKB-EC"/>
</dbReference>
<dbReference type="GO" id="GO:0019491">
    <property type="term" value="P:ectoine biosynthetic process"/>
    <property type="evidence" value="ECO:0007669"/>
    <property type="project" value="UniProtKB-UniPathway"/>
</dbReference>
<dbReference type="CDD" id="cd04301">
    <property type="entry name" value="NAT_SF"/>
    <property type="match status" value="1"/>
</dbReference>
<dbReference type="Gene3D" id="3.40.630.30">
    <property type="match status" value="1"/>
</dbReference>
<dbReference type="InterPro" id="IPR016181">
    <property type="entry name" value="Acyl_CoA_acyltransferase"/>
</dbReference>
<dbReference type="InterPro" id="IPR012772">
    <property type="entry name" value="Ectoine_EctA"/>
</dbReference>
<dbReference type="InterPro" id="IPR000182">
    <property type="entry name" value="GNAT_dom"/>
</dbReference>
<dbReference type="NCBIfam" id="TIGR02406">
    <property type="entry name" value="ectoine_EctA"/>
    <property type="match status" value="1"/>
</dbReference>
<dbReference type="Pfam" id="PF00583">
    <property type="entry name" value="Acetyltransf_1"/>
    <property type="match status" value="1"/>
</dbReference>
<dbReference type="SUPFAM" id="SSF55729">
    <property type="entry name" value="Acyl-CoA N-acyltransferases (Nat)"/>
    <property type="match status" value="1"/>
</dbReference>
<dbReference type="PROSITE" id="PS51186">
    <property type="entry name" value="GNAT"/>
    <property type="match status" value="1"/>
</dbReference>
<feature type="chain" id="PRO_0000220086" description="L-2,4-diaminobutyric acid acetyltransferase">
    <location>
        <begin position="1"/>
        <end position="192"/>
    </location>
</feature>
<feature type="domain" description="N-acetyltransferase" evidence="1">
    <location>
        <begin position="31"/>
        <end position="192"/>
    </location>
</feature>